<gene>
    <name evidence="1 3" type="primary">lysZ</name>
    <name type="ordered locus">Saci_0751</name>
</gene>
<reference key="1">
    <citation type="journal article" date="2005" name="J. Bacteriol.">
        <title>The genome of Sulfolobus acidocaldarius, a model organism of the Crenarchaeota.</title>
        <authorList>
            <person name="Chen L."/>
            <person name="Bruegger K."/>
            <person name="Skovgaard M."/>
            <person name="Redder P."/>
            <person name="She Q."/>
            <person name="Torarinsson E."/>
            <person name="Greve B."/>
            <person name="Awayez M."/>
            <person name="Zibat A."/>
            <person name="Klenk H.-P."/>
            <person name="Garrett R.A."/>
        </authorList>
    </citation>
    <scope>NUCLEOTIDE SEQUENCE [LARGE SCALE GENOMIC DNA]</scope>
    <source>
        <strain>ATCC 33909 / DSM 639 / JCM 8929 / NBRC 15157 / NCIMB 11770</strain>
    </source>
</reference>
<reference key="2">
    <citation type="journal article" date="2013" name="Nat. Chem. Biol.">
        <title>Lysine and arginine biosyntheses mediated by a common carrier protein in Sulfolobus.</title>
        <authorList>
            <person name="Ouchi T."/>
            <person name="Tomita T."/>
            <person name="Horie A."/>
            <person name="Yoshida A."/>
            <person name="Takahashi K."/>
            <person name="Nishida H."/>
            <person name="Lassak K."/>
            <person name="Taka H."/>
            <person name="Mineki R."/>
            <person name="Fujimura T."/>
            <person name="Kosono S."/>
            <person name="Nishiyama C."/>
            <person name="Masui R."/>
            <person name="Kuramitsu S."/>
            <person name="Albers S.V."/>
            <person name="Kuzuyama T."/>
            <person name="Nishiyama M."/>
        </authorList>
    </citation>
    <scope>CATALYTIC ACTIVITY</scope>
    <scope>FUNCTION</scope>
    <scope>PATHWAY</scope>
</reference>
<comment type="function">
    <text evidence="1 2">Involved in both the arginine and lysine biosynthetic pathways. Phosphorylates the LysW-bound precursors glutamate (for arginine biosynthesis), respectively alpha-aminoadipate (for lysine biosynthesis).</text>
</comment>
<comment type="catalytic activity">
    <reaction evidence="1 2">
        <text>[amino-group carrier protein]-C-terminal-N-(1,4-dicarboxybutan-1-yl)-L-glutamine + ATP = [amino-group carrier protein]-C-terminal-N-(1-carboxy-5-phosphooxy-5-oxopentan-1-yl)-L-glutamine + ADP</text>
        <dbReference type="Rhea" id="RHEA:41944"/>
        <dbReference type="Rhea" id="RHEA-COMP:9694"/>
        <dbReference type="Rhea" id="RHEA-COMP:9712"/>
        <dbReference type="ChEBI" id="CHEBI:30616"/>
        <dbReference type="ChEBI" id="CHEBI:78499"/>
        <dbReference type="ChEBI" id="CHEBI:78503"/>
        <dbReference type="ChEBI" id="CHEBI:456216"/>
        <dbReference type="EC" id="2.7.2.17"/>
    </reaction>
</comment>
<comment type="catalytic activity">
    <reaction evidence="1 2">
        <text>[amino-group carrier protein]-C-terminal-gamma-(L-glutamyl)-L-glutamate + ATP = [amino-group carrier protein]-C-terminal-gamma-(5-phospho-L-glutamyl)-L-glutamate + ADP</text>
        <dbReference type="Rhea" id="RHEA:52632"/>
        <dbReference type="Rhea" id="RHEA-COMP:13311"/>
        <dbReference type="Rhea" id="RHEA-COMP:13313"/>
        <dbReference type="ChEBI" id="CHEBI:30616"/>
        <dbReference type="ChEBI" id="CHEBI:136714"/>
        <dbReference type="ChEBI" id="CHEBI:136717"/>
        <dbReference type="ChEBI" id="CHEBI:456216"/>
        <dbReference type="EC" id="2.7.2.19"/>
    </reaction>
</comment>
<comment type="pathway">
    <text evidence="1 2">Amino-acid biosynthesis; L-lysine biosynthesis via AAA pathway; L-lysine from L-alpha-aminoadipate (Thermus route): step 2/5.</text>
</comment>
<comment type="pathway">
    <text evidence="1 2">Amino-acid biosynthesis; L-arginine biosynthesis.</text>
</comment>
<comment type="subcellular location">
    <subcellularLocation>
        <location evidence="1">Cytoplasm</location>
    </subcellularLocation>
</comment>
<comment type="similarity">
    <text evidence="1">Belongs to the acetylglutamate kinase family. LysZ subfamily.</text>
</comment>
<feature type="chain" id="PRO_0000112703" description="[LysW]-aminoadipate/[LysW]-glutamate kinase">
    <location>
        <begin position="1"/>
        <end position="261"/>
    </location>
</feature>
<feature type="binding site" evidence="1">
    <location>
        <begin position="35"/>
        <end position="36"/>
    </location>
    <ligand>
        <name>substrate</name>
    </ligand>
</feature>
<feature type="binding site" evidence="1">
    <location>
        <position position="62"/>
    </location>
    <ligand>
        <name>substrate</name>
    </ligand>
</feature>
<feature type="binding site" evidence="1">
    <location>
        <position position="166"/>
    </location>
    <ligand>
        <name>substrate</name>
    </ligand>
</feature>
<feature type="site" description="Transition state stabilizer" evidence="1">
    <location>
        <position position="5"/>
    </location>
</feature>
<feature type="site" description="Transition state stabilizer" evidence="1">
    <location>
        <position position="223"/>
    </location>
</feature>
<proteinExistence type="evidence at protein level"/>
<keyword id="KW-0028">Amino-acid biosynthesis</keyword>
<keyword id="KW-0055">Arginine biosynthesis</keyword>
<keyword id="KW-0067">ATP-binding</keyword>
<keyword id="KW-0963">Cytoplasm</keyword>
<keyword id="KW-0418">Kinase</keyword>
<keyword id="KW-0457">Lysine biosynthesis</keyword>
<keyword id="KW-0547">Nucleotide-binding</keyword>
<keyword id="KW-1185">Reference proteome</keyword>
<keyword id="KW-0808">Transferase</keyword>
<name>LYSZ_SULAC</name>
<protein>
    <recommendedName>
        <fullName evidence="1 4">[LysW]-aminoadipate/[LysW]-glutamate kinase</fullName>
        <ecNumber evidence="1 2">2.7.2.17</ecNumber>
        <ecNumber evidence="2">2.7.2.19</ecNumber>
    </recommendedName>
</protein>
<accession>Q4JAQ2</accession>
<sequence>MIVVKTGGRVLKQNLDRVVQSIIKTNNKIIYVHGGGDQVTELSSKLGIEPKFVTSPEGIRSRYTTKEELEVFIMVMSSISRNILSRVSSYRNSIALTGADGKLVLAERKKKIIVIDERGRKRIIDGGYTGKIKNINKELLVTFSNLFEVIILSPLAYDPDESTLLNVDGDQMAFALATALRSDNLILLTDVEGVMVDNKVVNKLTVEEAKELSKKIGPGMNRKILMAAEAIENGVKKVIISSGLVEDPIKNALEGKGTVIE</sequence>
<evidence type="ECO:0000255" key="1">
    <source>
        <dbReference type="HAMAP-Rule" id="MF_02082"/>
    </source>
</evidence>
<evidence type="ECO:0000269" key="2">
    <source>
    </source>
</evidence>
<evidence type="ECO:0000303" key="3">
    <source>
    </source>
</evidence>
<evidence type="ECO:0000305" key="4"/>
<organism>
    <name type="scientific">Sulfolobus acidocaldarius (strain ATCC 33909 / DSM 639 / JCM 8929 / NBRC 15157 / NCIMB 11770)</name>
    <dbReference type="NCBI Taxonomy" id="330779"/>
    <lineage>
        <taxon>Archaea</taxon>
        <taxon>Thermoproteota</taxon>
        <taxon>Thermoprotei</taxon>
        <taxon>Sulfolobales</taxon>
        <taxon>Sulfolobaceae</taxon>
        <taxon>Sulfolobus</taxon>
    </lineage>
</organism>
<dbReference type="EC" id="2.7.2.17" evidence="1 2"/>
<dbReference type="EC" id="2.7.2.19" evidence="2"/>
<dbReference type="EMBL" id="CP000077">
    <property type="protein sequence ID" value="AAY80127.1"/>
    <property type="molecule type" value="Genomic_DNA"/>
</dbReference>
<dbReference type="RefSeq" id="WP_011277629.1">
    <property type="nucleotide sequence ID" value="NC_007181.1"/>
</dbReference>
<dbReference type="SMR" id="Q4JAQ2"/>
<dbReference type="STRING" id="330779.Saci_0751"/>
<dbReference type="GeneID" id="14551269"/>
<dbReference type="KEGG" id="sai:Saci_0751"/>
<dbReference type="PATRIC" id="fig|330779.12.peg.720"/>
<dbReference type="eggNOG" id="arCOG00862">
    <property type="taxonomic scope" value="Archaea"/>
</dbReference>
<dbReference type="HOGENOM" id="CLU_053680_2_0_2"/>
<dbReference type="BioCyc" id="MetaCyc:MONOMER-18312"/>
<dbReference type="BRENDA" id="2.7.2.17">
    <property type="organism ID" value="6160"/>
</dbReference>
<dbReference type="UniPathway" id="UPA00033">
    <property type="reaction ID" value="UER00036"/>
</dbReference>
<dbReference type="UniPathway" id="UPA00068"/>
<dbReference type="Proteomes" id="UP000001018">
    <property type="component" value="Chromosome"/>
</dbReference>
<dbReference type="GO" id="GO:0005737">
    <property type="term" value="C:cytoplasm"/>
    <property type="evidence" value="ECO:0007669"/>
    <property type="project" value="UniProtKB-SubCell"/>
</dbReference>
<dbReference type="GO" id="GO:0003991">
    <property type="term" value="F:acetylglutamate kinase activity"/>
    <property type="evidence" value="ECO:0007669"/>
    <property type="project" value="TreeGrafter"/>
</dbReference>
<dbReference type="GO" id="GO:0005524">
    <property type="term" value="F:ATP binding"/>
    <property type="evidence" value="ECO:0007669"/>
    <property type="project" value="UniProtKB-KW"/>
</dbReference>
<dbReference type="GO" id="GO:0043744">
    <property type="term" value="F:N2-acetyl-L-aminoadipate kinase activity"/>
    <property type="evidence" value="ECO:0007669"/>
    <property type="project" value="RHEA"/>
</dbReference>
<dbReference type="GO" id="GO:0042450">
    <property type="term" value="P:arginine biosynthetic process via ornithine"/>
    <property type="evidence" value="ECO:0007669"/>
    <property type="project" value="UniProtKB-UniRule"/>
</dbReference>
<dbReference type="GO" id="GO:0006526">
    <property type="term" value="P:L-arginine biosynthetic process"/>
    <property type="evidence" value="ECO:0007669"/>
    <property type="project" value="UniProtKB-UniPathway"/>
</dbReference>
<dbReference type="GO" id="GO:0019878">
    <property type="term" value="P:lysine biosynthetic process via aminoadipic acid"/>
    <property type="evidence" value="ECO:0007669"/>
    <property type="project" value="UniProtKB-UniRule"/>
</dbReference>
<dbReference type="CDD" id="cd04251">
    <property type="entry name" value="AAK_NAGK-UC"/>
    <property type="match status" value="1"/>
</dbReference>
<dbReference type="Gene3D" id="3.40.1160.10">
    <property type="entry name" value="Acetylglutamate kinase-like"/>
    <property type="match status" value="1"/>
</dbReference>
<dbReference type="HAMAP" id="MF_02082">
    <property type="entry name" value="LysZ"/>
    <property type="match status" value="1"/>
</dbReference>
<dbReference type="InterPro" id="IPR036393">
    <property type="entry name" value="AceGlu_kinase-like_sf"/>
</dbReference>
<dbReference type="InterPro" id="IPR004662">
    <property type="entry name" value="AcgluKinase_fam"/>
</dbReference>
<dbReference type="InterPro" id="IPR001048">
    <property type="entry name" value="Asp/Glu/Uridylate_kinase"/>
</dbReference>
<dbReference type="InterPro" id="IPR037529">
    <property type="entry name" value="LysZ"/>
</dbReference>
<dbReference type="NCBIfam" id="TIGR00761">
    <property type="entry name" value="argB"/>
    <property type="match status" value="1"/>
</dbReference>
<dbReference type="NCBIfam" id="NF010662">
    <property type="entry name" value="PRK14058.1-4"/>
    <property type="match status" value="1"/>
</dbReference>
<dbReference type="PANTHER" id="PTHR23342">
    <property type="entry name" value="N-ACETYLGLUTAMATE SYNTHASE"/>
    <property type="match status" value="1"/>
</dbReference>
<dbReference type="PANTHER" id="PTHR23342:SF0">
    <property type="entry name" value="N-ACETYLGLUTAMATE SYNTHASE, MITOCHONDRIAL"/>
    <property type="match status" value="1"/>
</dbReference>
<dbReference type="Pfam" id="PF00696">
    <property type="entry name" value="AA_kinase"/>
    <property type="match status" value="1"/>
</dbReference>
<dbReference type="PIRSF" id="PIRSF000728">
    <property type="entry name" value="NAGK"/>
    <property type="match status" value="1"/>
</dbReference>
<dbReference type="SUPFAM" id="SSF53633">
    <property type="entry name" value="Carbamate kinase-like"/>
    <property type="match status" value="1"/>
</dbReference>